<evidence type="ECO:0000250" key="1">
    <source>
        <dbReference type="UniProtKB" id="Q92813"/>
    </source>
</evidence>
<evidence type="ECO:0000255" key="2"/>
<evidence type="ECO:0000255" key="3">
    <source>
        <dbReference type="PROSITE-ProRule" id="PRU10107"/>
    </source>
</evidence>
<evidence type="ECO:0000269" key="4">
    <source>
    </source>
</evidence>
<evidence type="ECO:0000305" key="5"/>
<evidence type="ECO:0000305" key="6">
    <source>
    </source>
</evidence>
<protein>
    <recommendedName>
        <fullName>Type II iodothyronine deiodinase</fullName>
        <ecNumber evidence="4">1.21.99.4</ecNumber>
    </recommendedName>
    <alternativeName>
        <fullName>5DII</fullName>
    </alternativeName>
    <alternativeName>
        <fullName>DIOII</fullName>
    </alternativeName>
    <alternativeName>
        <fullName>Type 2 DI</fullName>
    </alternativeName>
    <alternativeName>
        <fullName>Type-II 5'-deiodinase</fullName>
    </alternativeName>
</protein>
<sequence>MGSASEDLLVTLQILPGFFSNCLFLALYDSVVLVKRVVALLSRSRSAGCGEWRRMLTSEGLRSIWNSFLLDAHKQVKLGCEAPNSKVVKVPDGPRWSSTVVPCGSRIQTGGECRLLDFESSDRPLVVNFGSATUPPFISHLPAFRQLVEDFSDVADFLLVYIDEAHPSDGWVAPQMGACSFSFRKHQNLEERIGAARKLIEHFSLPPQCQLVADCMDNNANVAYGVANERVCIVHQRKIAYLGGKGPFFYSLKDVRQWLELSYGRR</sequence>
<keyword id="KW-0256">Endoplasmic reticulum</keyword>
<keyword id="KW-0472">Membrane</keyword>
<keyword id="KW-0560">Oxidoreductase</keyword>
<keyword id="KW-0712">Selenocysteine</keyword>
<keyword id="KW-0893">Thyroid hormones biosynthesis</keyword>
<keyword id="KW-0812">Transmembrane</keyword>
<keyword id="KW-1133">Transmembrane helix</keyword>
<feature type="chain" id="PRO_0000154321" description="Type II iodothyronine deiodinase">
    <location>
        <begin position="1"/>
        <end position="266"/>
    </location>
</feature>
<feature type="topological domain" description="Lumenal" evidence="1">
    <location>
        <begin position="1"/>
        <end position="13"/>
    </location>
</feature>
<feature type="transmembrane region" description="Helical; Signal-anchor for type III membrane protein" evidence="2">
    <location>
        <begin position="14"/>
        <end position="34"/>
    </location>
</feature>
<feature type="topological domain" description="Cytoplasmic" evidence="1">
    <location>
        <begin position="35"/>
        <end position="266"/>
    </location>
</feature>
<feature type="active site">
    <location>
        <position position="134"/>
    </location>
</feature>
<feature type="non-standard amino acid" description="Selenocysteine">
    <location>
        <position position="134"/>
    </location>
</feature>
<feature type="sequence conflict" description="In Ref. 1; AAB39651." evidence="5" ref="1">
    <original>T</original>
    <variation>A</variation>
    <location>
        <position position="109"/>
    </location>
</feature>
<dbReference type="EC" id="1.21.99.4" evidence="4"/>
<dbReference type="EMBL" id="U70869">
    <property type="protein sequence ID" value="AAB39651.2"/>
    <property type="molecule type" value="mRNA"/>
</dbReference>
<dbReference type="EMBL" id="AY065833">
    <property type="protein sequence ID" value="AAC79662.2"/>
    <property type="molecule type" value="mRNA"/>
</dbReference>
<dbReference type="EMBL" id="AY065834">
    <property type="protein sequence ID" value="AAL62449.1"/>
    <property type="molecule type" value="Genomic_DNA"/>
</dbReference>
<dbReference type="RefSeq" id="NP_001296885.1">
    <property type="nucleotide sequence ID" value="NM_001309956.1"/>
</dbReference>
<dbReference type="STRING" id="8078.ENSFHEP00000014289"/>
<dbReference type="GeneID" id="105917782"/>
<dbReference type="CTD" id="1734"/>
<dbReference type="OrthoDB" id="428577at2759"/>
<dbReference type="Proteomes" id="UP000265000">
    <property type="component" value="Whole Genome Shotgun Assembly"/>
</dbReference>
<dbReference type="GO" id="GO:0005789">
    <property type="term" value="C:endoplasmic reticulum membrane"/>
    <property type="evidence" value="ECO:0000250"/>
    <property type="project" value="UniProtKB"/>
</dbReference>
<dbReference type="GO" id="GO:0004800">
    <property type="term" value="F:thyroxine 5'-deiodinase activity"/>
    <property type="evidence" value="ECO:0000250"/>
    <property type="project" value="UniProtKB"/>
</dbReference>
<dbReference type="GO" id="GO:0042446">
    <property type="term" value="P:hormone biosynthetic process"/>
    <property type="evidence" value="ECO:0007669"/>
    <property type="project" value="UniProtKB-KW"/>
</dbReference>
<dbReference type="GO" id="GO:0042403">
    <property type="term" value="P:thyroid hormone metabolic process"/>
    <property type="evidence" value="ECO:0000250"/>
    <property type="project" value="UniProtKB"/>
</dbReference>
<dbReference type="FunFam" id="3.40.30.10:FF:000194">
    <property type="entry name" value="Iodothyronine deiodinase"/>
    <property type="match status" value="1"/>
</dbReference>
<dbReference type="Gene3D" id="3.40.30.10">
    <property type="entry name" value="Glutaredoxin"/>
    <property type="match status" value="1"/>
</dbReference>
<dbReference type="InterPro" id="IPR000643">
    <property type="entry name" value="Iodothyronine_deiodinase"/>
</dbReference>
<dbReference type="InterPro" id="IPR008261">
    <property type="entry name" value="Iodothyronine_deiodinase_AS"/>
</dbReference>
<dbReference type="InterPro" id="IPR036249">
    <property type="entry name" value="Thioredoxin-like_sf"/>
</dbReference>
<dbReference type="PANTHER" id="PTHR11781">
    <property type="entry name" value="IODOTHYRONINE DEIODINASE"/>
    <property type="match status" value="1"/>
</dbReference>
<dbReference type="PANTHER" id="PTHR11781:SF20">
    <property type="entry name" value="TYPE II IODOTHYRONINE DEIODINASE"/>
    <property type="match status" value="1"/>
</dbReference>
<dbReference type="Pfam" id="PF00837">
    <property type="entry name" value="T4_deiodinase"/>
    <property type="match status" value="1"/>
</dbReference>
<dbReference type="PIRSF" id="PIRSF001330">
    <property type="entry name" value="IOD"/>
    <property type="match status" value="1"/>
</dbReference>
<dbReference type="SUPFAM" id="SSF52833">
    <property type="entry name" value="Thioredoxin-like"/>
    <property type="match status" value="1"/>
</dbReference>
<dbReference type="PROSITE" id="PS01205">
    <property type="entry name" value="T4_DEIODINASE"/>
    <property type="match status" value="1"/>
</dbReference>
<organism>
    <name type="scientific">Fundulus heteroclitus</name>
    <name type="common">Killifish</name>
    <name type="synonym">Mummichog</name>
    <dbReference type="NCBI Taxonomy" id="8078"/>
    <lineage>
        <taxon>Eukaryota</taxon>
        <taxon>Metazoa</taxon>
        <taxon>Chordata</taxon>
        <taxon>Craniata</taxon>
        <taxon>Vertebrata</taxon>
        <taxon>Euteleostomi</taxon>
        <taxon>Actinopterygii</taxon>
        <taxon>Neopterygii</taxon>
        <taxon>Teleostei</taxon>
        <taxon>Neoteleostei</taxon>
        <taxon>Acanthomorphata</taxon>
        <taxon>Ovalentaria</taxon>
        <taxon>Atherinomorphae</taxon>
        <taxon>Cyprinodontiformes</taxon>
        <taxon>Fundulidae</taxon>
        <taxon>Fundulus</taxon>
    </lineage>
</organism>
<reference key="1">
    <citation type="journal article" date="1997" name="Endocrinology">
        <title>Cloning and expression of a 5'-iodothyronine deiodinase from the liver of Fundulus heteroclitus.</title>
        <authorList>
            <person name="Valverde C."/>
            <person name="Croteau W."/>
            <person name="Lafleur G.J. Jr."/>
            <person name="Orozco A."/>
            <person name="St Germain D.L."/>
        </authorList>
    </citation>
    <scope>NUCLEOTIDE SEQUENCE [MRNA]</scope>
    <scope>FUNCTION</scope>
    <scope>CATALYTIC ACTIVITY</scope>
    <scope>ACTIVITY REGULATION</scope>
    <scope>BIOPHYSICOCHEMICAL PROPERTIES</scope>
    <source>
        <tissue>Liver</tissue>
    </source>
</reference>
<reference key="2">
    <citation type="journal article" date="2002" name="Gen. Comp. Endocrinol.">
        <title>Cloning of the gene and complete cDNA encoding a type 2 deiodinase from Fundulus heteroclitus.</title>
        <authorList>
            <person name="Orozco A."/>
            <person name="Jeziorski M.C."/>
            <person name="Linser P.J."/>
            <person name="Greenberg R.M."/>
            <person name="Valverde-R C."/>
        </authorList>
    </citation>
    <scope>NUCLEOTIDE SEQUENCE [GENOMIC DNA / MRNA]</scope>
    <scope>SEQUENCE REVISION TO 109</scope>
</reference>
<gene>
    <name type="primary">dio2</name>
</gene>
<proteinExistence type="evidence at protein level"/>
<accession>P79747</accession>
<accession>Q8QFX5</accession>
<comment type="function">
    <text evidence="1 4">Plays a crucial role in the metabolism of thyroid hormones (TH) and has specific roles in TH activation and inactivation by deiodination. Catalyzes the conversion of T4 (L-thyroxine/3,5,3',5'-tetraiodothyronine) to T3 (3,5,3'-triiodothyronine) and rT3 (3,3',5'-triiodothyronine) to T2 (3,3'-diiodothyronine) via outer-ring deiodination (ORD) (PubMed:9002998). Catalyzes the conversion 3',5'-T2 (3,5-diiodothyronine) to 3-T1 (3-monoiodothyronine) via ORD (By similarity).</text>
</comment>
<comment type="catalytic activity">
    <reaction evidence="3 4">
        <text>3,3',5-triiodo-L-thyronine + iodide + A + H(+) = L-thyroxine + AH2</text>
        <dbReference type="Rhea" id="RHEA:19745"/>
        <dbReference type="ChEBI" id="CHEBI:13193"/>
        <dbReference type="ChEBI" id="CHEBI:15378"/>
        <dbReference type="ChEBI" id="CHEBI:16382"/>
        <dbReference type="ChEBI" id="CHEBI:17499"/>
        <dbReference type="ChEBI" id="CHEBI:58448"/>
        <dbReference type="ChEBI" id="CHEBI:533015"/>
        <dbReference type="EC" id="1.21.99.4"/>
    </reaction>
    <physiologicalReaction direction="right-to-left" evidence="6">
        <dbReference type="Rhea" id="RHEA:19747"/>
    </physiologicalReaction>
</comment>
<comment type="catalytic activity">
    <reaction evidence="4">
        <text>3,3'-diiodo-L-thyronine + iodide + A + H(+) = 3,3',5'-triiodo-L-thyronine + AH2</text>
        <dbReference type="Rhea" id="RHEA:82575"/>
        <dbReference type="ChEBI" id="CHEBI:13193"/>
        <dbReference type="ChEBI" id="CHEBI:15378"/>
        <dbReference type="ChEBI" id="CHEBI:16382"/>
        <dbReference type="ChEBI" id="CHEBI:17499"/>
        <dbReference type="ChEBI" id="CHEBI:57261"/>
        <dbReference type="ChEBI" id="CHEBI:176514"/>
    </reaction>
    <physiologicalReaction direction="right-to-left" evidence="6">
        <dbReference type="Rhea" id="RHEA:82577"/>
    </physiologicalReaction>
</comment>
<comment type="catalytic activity">
    <reaction evidence="1">
        <text>3'-iodo-L-thyronine + iodide + A + H(+) = 3',5'-diiodo-L-thyronine + AH2</text>
        <dbReference type="Rhea" id="RHEA:82899"/>
        <dbReference type="ChEBI" id="CHEBI:13193"/>
        <dbReference type="ChEBI" id="CHEBI:15378"/>
        <dbReference type="ChEBI" id="CHEBI:16382"/>
        <dbReference type="ChEBI" id="CHEBI:17499"/>
        <dbReference type="ChEBI" id="CHEBI:195762"/>
        <dbReference type="ChEBI" id="CHEBI:232695"/>
    </reaction>
    <physiologicalReaction direction="right-to-left" evidence="1">
        <dbReference type="Rhea" id="RHEA:82901"/>
    </physiologicalReaction>
</comment>
<comment type="activity regulation">
    <text evidence="4">Not inhibited by N(6)-propylthiouracil.</text>
</comment>
<comment type="biophysicochemical properties">
    <kinetics>
        <KM evidence="4">0.5 nM for thyroxine</KM>
        <KM evidence="4">1 nM for 3,3',5'-triiodo-L-thyronine</KM>
        <Vmax evidence="4">0.21 pmol/min/mg enzyme towards thyroxine</Vmax>
        <Vmax evidence="4">0.45 pmol/min/mg enzyme towards 3,3',5'-triiodo-L-thyronine</Vmax>
    </kinetics>
</comment>
<comment type="subunit">
    <text evidence="1">Predominantly monomer. Can form homodimers but homodimerization is not essential for enzyme activity.</text>
</comment>
<comment type="subcellular location">
    <subcellularLocation>
        <location evidence="1">Endoplasmic reticulum membrane</location>
        <topology evidence="1">Single-pass type III membrane protein</topology>
    </subcellularLocation>
</comment>
<comment type="similarity">
    <text evidence="5">Belongs to the iodothyronine deiodinase family.</text>
</comment>
<name>IOD2_FUNHE</name>